<protein>
    <recommendedName>
        <fullName evidence="1">DNA mismatch repair protein MutS</fullName>
    </recommendedName>
</protein>
<sequence length="928" mass="104513">MALTPMMVEYMKTKEEYSDCILFYRLGDFYEMFFDDAITVSRELELVLTGKNCGLEERAPMCGIPHHAAAAYIPRLVNKGYKVAICEQLEDPKEAKGIVKRGVVKIITPGTFIDANSSLENDNTYLMTIYESDERIGLAVSDISTGEFKTTSFDNIKITLLDEISKVAPKEILVDKNISQSLIDDIKGITTALITEKDFNEFIVSKEEIIDQFSDLEVSGLVNEREISSRVLLKYIYETQKMSLTNINLLEQYEIINYMTIDGNSRRNLELTESIREKSKKGSLLWVLDKSATSMGGRTIRKWIEEPLIIKSEIEKRLSGVSEAFSSISFNEDLRSSLKDIYDIERIVGKISNKNVNAKDMLSLKASLDKLPSIKELLGTANSELLKEYYENLDELSDIRELLESSIKEEPSLSIKEGNIIKDGYNSEVDELRQSKLHGKEWIAALENREREFTGIKSLKVGYNKVFGYYIEISKSNYNSIPEGRYVRKQTLANAERYITEELKIMEDKILGAEEKLINLEYSLFTDIRDSIEKEIARLKKSARIISNLDGISTLALIALENDYVKPEINEDGIIEIVDGRHPVVEKVIGRGEFVSNNTTLNQSDKELLLITGPNMAGKSTYMRQVALITLMAQIGSFVPASSANISICDKIFTRIGASDDLAGGKSTFMVEMWEVSNILKNATSKSLVLLDEVGRGTSTYDGLSIAWSVIEYITGNENLRCKTLFATHYHELVKLEGVLPGVKNYSVAVKKMKDSVIFLRKIVEGGADESYGIEVAKLAGLPDDVINRAKEILLGLEGENNFDIHKVTNTEIIENEVAVDINQANNVVTITEKACESKSEYIEKVEAKDSFDKAKSNKDDHRIDEKTENSSKKHKNKDSSNNMQLDFTFIEKEAFLKEVSEVDILSLNPMEAMNTLYRLVAEAKKLK</sequence>
<name>MUTS_CLOB8</name>
<comment type="function">
    <text evidence="1">This protein is involved in the repair of mismatches in DNA. It is possible that it carries out the mismatch recognition step. This protein has a weak ATPase activity.</text>
</comment>
<comment type="similarity">
    <text evidence="1">Belongs to the DNA mismatch repair MutS family.</text>
</comment>
<feature type="chain" id="PRO_0000335137" description="DNA mismatch repair protein MutS">
    <location>
        <begin position="1"/>
        <end position="928"/>
    </location>
</feature>
<feature type="region of interest" description="Disordered" evidence="2">
    <location>
        <begin position="854"/>
        <end position="880"/>
    </location>
</feature>
<feature type="compositionally biased region" description="Basic and acidic residues" evidence="2">
    <location>
        <begin position="854"/>
        <end position="872"/>
    </location>
</feature>
<feature type="binding site" evidence="1">
    <location>
        <begin position="613"/>
        <end position="620"/>
    </location>
    <ligand>
        <name>ATP</name>
        <dbReference type="ChEBI" id="CHEBI:30616"/>
    </ligand>
</feature>
<keyword id="KW-0067">ATP-binding</keyword>
<keyword id="KW-0227">DNA damage</keyword>
<keyword id="KW-0234">DNA repair</keyword>
<keyword id="KW-0238">DNA-binding</keyword>
<keyword id="KW-0547">Nucleotide-binding</keyword>
<evidence type="ECO:0000255" key="1">
    <source>
        <dbReference type="HAMAP-Rule" id="MF_00096"/>
    </source>
</evidence>
<evidence type="ECO:0000256" key="2">
    <source>
        <dbReference type="SAM" id="MobiDB-lite"/>
    </source>
</evidence>
<reference key="1">
    <citation type="submission" date="2007-06" db="EMBL/GenBank/DDBJ databases">
        <title>Complete sequence of Clostridium beijerinckii NCIMB 8052.</title>
        <authorList>
            <consortium name="US DOE Joint Genome Institute"/>
            <person name="Copeland A."/>
            <person name="Lucas S."/>
            <person name="Lapidus A."/>
            <person name="Barry K."/>
            <person name="Detter J.C."/>
            <person name="Glavina del Rio T."/>
            <person name="Hammon N."/>
            <person name="Israni S."/>
            <person name="Dalin E."/>
            <person name="Tice H."/>
            <person name="Pitluck S."/>
            <person name="Sims D."/>
            <person name="Brettin T."/>
            <person name="Bruce D."/>
            <person name="Tapia R."/>
            <person name="Brainard J."/>
            <person name="Schmutz J."/>
            <person name="Larimer F."/>
            <person name="Land M."/>
            <person name="Hauser L."/>
            <person name="Kyrpides N."/>
            <person name="Mikhailova N."/>
            <person name="Bennet G."/>
            <person name="Cann I."/>
            <person name="Chen J.-S."/>
            <person name="Contreras A.L."/>
            <person name="Jones D."/>
            <person name="Kashket E."/>
            <person name="Mitchell W."/>
            <person name="Stoddard S."/>
            <person name="Schwarz W."/>
            <person name="Qureshi N."/>
            <person name="Young M."/>
            <person name="Shi Z."/>
            <person name="Ezeji T."/>
            <person name="White B."/>
            <person name="Blaschek H."/>
            <person name="Richardson P."/>
        </authorList>
    </citation>
    <scope>NUCLEOTIDE SEQUENCE [LARGE SCALE GENOMIC DNA]</scope>
    <source>
        <strain>ATCC 51743 / NCIMB 8052</strain>
    </source>
</reference>
<gene>
    <name evidence="1" type="primary">mutS</name>
    <name type="ordered locus">Cbei_2569</name>
</gene>
<organism>
    <name type="scientific">Clostridium beijerinckii (strain ATCC 51743 / NCIMB 8052)</name>
    <name type="common">Clostridium acetobutylicum</name>
    <dbReference type="NCBI Taxonomy" id="290402"/>
    <lineage>
        <taxon>Bacteria</taxon>
        <taxon>Bacillati</taxon>
        <taxon>Bacillota</taxon>
        <taxon>Clostridia</taxon>
        <taxon>Eubacteriales</taxon>
        <taxon>Clostridiaceae</taxon>
        <taxon>Clostridium</taxon>
    </lineage>
</organism>
<proteinExistence type="inferred from homology"/>
<accession>A6LWJ5</accession>
<dbReference type="EMBL" id="CP000721">
    <property type="protein sequence ID" value="ABR34725.1"/>
    <property type="molecule type" value="Genomic_DNA"/>
</dbReference>
<dbReference type="RefSeq" id="WP_012058780.1">
    <property type="nucleotide sequence ID" value="NC_009617.1"/>
</dbReference>
<dbReference type="SMR" id="A6LWJ5"/>
<dbReference type="KEGG" id="cbe:Cbei_2569"/>
<dbReference type="eggNOG" id="COG0249">
    <property type="taxonomic scope" value="Bacteria"/>
</dbReference>
<dbReference type="HOGENOM" id="CLU_002472_3_1_9"/>
<dbReference type="Proteomes" id="UP000000565">
    <property type="component" value="Chromosome"/>
</dbReference>
<dbReference type="GO" id="GO:0005829">
    <property type="term" value="C:cytosol"/>
    <property type="evidence" value="ECO:0007669"/>
    <property type="project" value="TreeGrafter"/>
</dbReference>
<dbReference type="GO" id="GO:0005524">
    <property type="term" value="F:ATP binding"/>
    <property type="evidence" value="ECO:0007669"/>
    <property type="project" value="UniProtKB-UniRule"/>
</dbReference>
<dbReference type="GO" id="GO:0140664">
    <property type="term" value="F:ATP-dependent DNA damage sensor activity"/>
    <property type="evidence" value="ECO:0007669"/>
    <property type="project" value="InterPro"/>
</dbReference>
<dbReference type="GO" id="GO:0003684">
    <property type="term" value="F:damaged DNA binding"/>
    <property type="evidence" value="ECO:0007669"/>
    <property type="project" value="UniProtKB-UniRule"/>
</dbReference>
<dbReference type="GO" id="GO:0030983">
    <property type="term" value="F:mismatched DNA binding"/>
    <property type="evidence" value="ECO:0007669"/>
    <property type="project" value="InterPro"/>
</dbReference>
<dbReference type="GO" id="GO:0006298">
    <property type="term" value="P:mismatch repair"/>
    <property type="evidence" value="ECO:0007669"/>
    <property type="project" value="UniProtKB-UniRule"/>
</dbReference>
<dbReference type="CDD" id="cd03284">
    <property type="entry name" value="ABC_MutS1"/>
    <property type="match status" value="1"/>
</dbReference>
<dbReference type="FunFam" id="1.10.1420.10:FF:000007">
    <property type="entry name" value="DNA mismatch repair protein MutS"/>
    <property type="match status" value="1"/>
</dbReference>
<dbReference type="FunFam" id="3.40.1170.10:FF:000001">
    <property type="entry name" value="DNA mismatch repair protein MutS"/>
    <property type="match status" value="1"/>
</dbReference>
<dbReference type="FunFam" id="3.40.50.300:FF:001579">
    <property type="entry name" value="DNA mismatch repair protein MutS"/>
    <property type="match status" value="1"/>
</dbReference>
<dbReference type="Gene3D" id="1.10.1420.10">
    <property type="match status" value="2"/>
</dbReference>
<dbReference type="Gene3D" id="3.40.1170.10">
    <property type="entry name" value="DNA repair protein MutS, domain I"/>
    <property type="match status" value="1"/>
</dbReference>
<dbReference type="Gene3D" id="3.30.420.110">
    <property type="entry name" value="MutS, connector domain"/>
    <property type="match status" value="1"/>
</dbReference>
<dbReference type="Gene3D" id="3.40.50.300">
    <property type="entry name" value="P-loop containing nucleotide triphosphate hydrolases"/>
    <property type="match status" value="1"/>
</dbReference>
<dbReference type="HAMAP" id="MF_00096">
    <property type="entry name" value="MutS"/>
    <property type="match status" value="1"/>
</dbReference>
<dbReference type="InterPro" id="IPR005748">
    <property type="entry name" value="DNA_mismatch_repair_MutS"/>
</dbReference>
<dbReference type="InterPro" id="IPR007695">
    <property type="entry name" value="DNA_mismatch_repair_MutS-lik_N"/>
</dbReference>
<dbReference type="InterPro" id="IPR017261">
    <property type="entry name" value="DNA_mismatch_repair_MutS/MSH"/>
</dbReference>
<dbReference type="InterPro" id="IPR000432">
    <property type="entry name" value="DNA_mismatch_repair_MutS_C"/>
</dbReference>
<dbReference type="InterPro" id="IPR007861">
    <property type="entry name" value="DNA_mismatch_repair_MutS_clamp"/>
</dbReference>
<dbReference type="InterPro" id="IPR007696">
    <property type="entry name" value="DNA_mismatch_repair_MutS_core"/>
</dbReference>
<dbReference type="InterPro" id="IPR016151">
    <property type="entry name" value="DNA_mismatch_repair_MutS_N"/>
</dbReference>
<dbReference type="InterPro" id="IPR036187">
    <property type="entry name" value="DNA_mismatch_repair_MutS_sf"/>
</dbReference>
<dbReference type="InterPro" id="IPR007860">
    <property type="entry name" value="DNA_mmatch_repair_MutS_con_dom"/>
</dbReference>
<dbReference type="InterPro" id="IPR045076">
    <property type="entry name" value="MutS"/>
</dbReference>
<dbReference type="InterPro" id="IPR036678">
    <property type="entry name" value="MutS_con_dom_sf"/>
</dbReference>
<dbReference type="InterPro" id="IPR027417">
    <property type="entry name" value="P-loop_NTPase"/>
</dbReference>
<dbReference type="NCBIfam" id="TIGR01070">
    <property type="entry name" value="mutS1"/>
    <property type="match status" value="1"/>
</dbReference>
<dbReference type="NCBIfam" id="NF003810">
    <property type="entry name" value="PRK05399.1"/>
    <property type="match status" value="1"/>
</dbReference>
<dbReference type="PANTHER" id="PTHR11361:SF34">
    <property type="entry name" value="DNA MISMATCH REPAIR PROTEIN MSH1, MITOCHONDRIAL"/>
    <property type="match status" value="1"/>
</dbReference>
<dbReference type="PANTHER" id="PTHR11361">
    <property type="entry name" value="DNA MISMATCH REPAIR PROTEIN MUTS FAMILY MEMBER"/>
    <property type="match status" value="1"/>
</dbReference>
<dbReference type="Pfam" id="PF01624">
    <property type="entry name" value="MutS_I"/>
    <property type="match status" value="1"/>
</dbReference>
<dbReference type="Pfam" id="PF05188">
    <property type="entry name" value="MutS_II"/>
    <property type="match status" value="1"/>
</dbReference>
<dbReference type="Pfam" id="PF05192">
    <property type="entry name" value="MutS_III"/>
    <property type="match status" value="1"/>
</dbReference>
<dbReference type="Pfam" id="PF05190">
    <property type="entry name" value="MutS_IV"/>
    <property type="match status" value="1"/>
</dbReference>
<dbReference type="Pfam" id="PF00488">
    <property type="entry name" value="MutS_V"/>
    <property type="match status" value="1"/>
</dbReference>
<dbReference type="PIRSF" id="PIRSF037677">
    <property type="entry name" value="DNA_mis_repair_Msh6"/>
    <property type="match status" value="1"/>
</dbReference>
<dbReference type="SMART" id="SM00534">
    <property type="entry name" value="MUTSac"/>
    <property type="match status" value="1"/>
</dbReference>
<dbReference type="SMART" id="SM00533">
    <property type="entry name" value="MUTSd"/>
    <property type="match status" value="1"/>
</dbReference>
<dbReference type="SUPFAM" id="SSF55271">
    <property type="entry name" value="DNA repair protein MutS, domain I"/>
    <property type="match status" value="1"/>
</dbReference>
<dbReference type="SUPFAM" id="SSF53150">
    <property type="entry name" value="DNA repair protein MutS, domain II"/>
    <property type="match status" value="1"/>
</dbReference>
<dbReference type="SUPFAM" id="SSF48334">
    <property type="entry name" value="DNA repair protein MutS, domain III"/>
    <property type="match status" value="1"/>
</dbReference>
<dbReference type="SUPFAM" id="SSF52540">
    <property type="entry name" value="P-loop containing nucleoside triphosphate hydrolases"/>
    <property type="match status" value="1"/>
</dbReference>
<dbReference type="PROSITE" id="PS00486">
    <property type="entry name" value="DNA_MISMATCH_REPAIR_2"/>
    <property type="match status" value="1"/>
</dbReference>